<feature type="chain" id="PRO_0000142671" description="Nucleoprotein">
    <location>
        <begin position="1"/>
        <end position="524"/>
    </location>
</feature>
<feature type="region of interest" description="Ncore" evidence="2">
    <location>
        <begin position="4"/>
        <end position="404"/>
    </location>
</feature>
<feature type="region of interest" description="Ntail" evidence="2">
    <location>
        <begin position="405"/>
        <end position="524"/>
    </location>
</feature>
<feature type="region of interest" description="Homomultimerization" evidence="3">
    <location>
        <begin position="440"/>
        <end position="461"/>
    </location>
</feature>
<feature type="region of interest" description="Interaction with the phosphoprotein" evidence="3">
    <location>
        <begin position="462"/>
        <end position="471"/>
    </location>
</feature>
<feature type="region of interest" description="Disordered" evidence="4">
    <location>
        <begin position="496"/>
        <end position="524"/>
    </location>
</feature>
<feature type="compositionally biased region" description="Acidic residues" evidence="4">
    <location>
        <begin position="505"/>
        <end position="515"/>
    </location>
</feature>
<feature type="binding site" evidence="1">
    <location>
        <position position="180"/>
    </location>
    <ligand>
        <name>RNA</name>
        <dbReference type="ChEBI" id="CHEBI:33697"/>
    </ligand>
</feature>
<feature type="binding site" evidence="1">
    <location>
        <position position="190"/>
    </location>
    <ligand>
        <name>RNA</name>
        <dbReference type="ChEBI" id="CHEBI:33697"/>
    </ligand>
</feature>
<feature type="binding site" evidence="1">
    <location>
        <position position="195"/>
    </location>
    <ligand>
        <name>RNA</name>
        <dbReference type="ChEBI" id="CHEBI:33697"/>
    </ligand>
</feature>
<feature type="binding site" evidence="1">
    <location>
        <position position="260"/>
    </location>
    <ligand>
        <name>RNA</name>
        <dbReference type="ChEBI" id="CHEBI:33697"/>
    </ligand>
</feature>
<feature type="binding site" evidence="1">
    <location>
        <position position="350"/>
    </location>
    <ligand>
        <name>RNA</name>
        <dbReference type="ChEBI" id="CHEBI:33697"/>
    </ligand>
</feature>
<feature type="binding site" evidence="1">
    <location>
        <position position="354"/>
    </location>
    <ligand>
        <name>RNA</name>
        <dbReference type="ChEBI" id="CHEBI:33697"/>
    </ligand>
</feature>
<organism>
    <name type="scientific">Human parainfluenza 1 virus (strains A1426 / 86-315 / 62m-753)</name>
    <name type="common">HPIV-1</name>
    <dbReference type="NCBI Taxonomy" id="36412"/>
    <lineage>
        <taxon>Viruses</taxon>
        <taxon>Riboviria</taxon>
        <taxon>Orthornavirae</taxon>
        <taxon>Negarnaviricota</taxon>
        <taxon>Haploviricotina</taxon>
        <taxon>Monjiviricetes</taxon>
        <taxon>Mononegavirales</taxon>
        <taxon>Paramyxoviridae</taxon>
        <taxon>Feraresvirinae</taxon>
        <taxon>Respirovirus</taxon>
        <taxon>Respirovirus laryngotracheitidis</taxon>
    </lineage>
</organism>
<evidence type="ECO:0000250" key="1">
    <source>
        <dbReference type="UniProtKB" id="O57286"/>
    </source>
</evidence>
<evidence type="ECO:0000250" key="2">
    <source>
        <dbReference type="UniProtKB" id="P06159"/>
    </source>
</evidence>
<evidence type="ECO:0000250" key="3">
    <source>
        <dbReference type="UniProtKB" id="Q07097"/>
    </source>
</evidence>
<evidence type="ECO:0000256" key="4">
    <source>
        <dbReference type="SAM" id="MobiDB-lite"/>
    </source>
</evidence>
<evidence type="ECO:0000305" key="5"/>
<sequence>MAGLLSTFDTFSSRRSESINKSGGGAIIPGQRSTVSVFTLGPSVTDDADKLLIATTFLAHSLDTDKQHSQRGGFLVSLLAMAYSSPELYLTTNGVNADVKYVIYNIERDPKRTKTDGFIVKTRDMEYERTTEWLFGPMINKNPLFQGQRENADLEALLQTYGYPACLGAIIVQVWIVLVKAITSSAGLRKGFFNRLEAFRQDGTVKSALVFTGDTVEGIGAVMRSQQSLVSLMVETLVTMNTSRSDLTTLEKNIQIVGNYIRDAGLASFMNTIKYGVETKMAALTLSNLRPDLNKLRSLVDIYLSKGARAPFICILRDPVHGDFAPGNYPALWSYAMGVAVVQNKAMQQYVTGRTYLDMEMFLLGQAVAKDADSKISSALEEELGVTDTAKERLRHHLTNLSGGDGAYHKPTGGGAIEVAIDHTDITFGVEDTADRDNKNWTNDSNERWMNHSTNNHTITIHGAEELEEETNDEDIIDIENKIARRLADRKQRLNQANNKRDISSDADYENDDDATAAAEIGGI</sequence>
<accession>P36354</accession>
<name>NCAP_PI1HA</name>
<dbReference type="EMBL" id="S38060">
    <property type="protein sequence ID" value="AAB22343.1"/>
    <property type="molecule type" value="Genomic_RNA"/>
</dbReference>
<dbReference type="PIR" id="A48341">
    <property type="entry name" value="A48341"/>
</dbReference>
<dbReference type="SMR" id="P36354"/>
<dbReference type="GO" id="GO:0019029">
    <property type="term" value="C:helical viral capsid"/>
    <property type="evidence" value="ECO:0007669"/>
    <property type="project" value="UniProtKB-KW"/>
</dbReference>
<dbReference type="GO" id="GO:0030430">
    <property type="term" value="C:host cell cytoplasm"/>
    <property type="evidence" value="ECO:0007669"/>
    <property type="project" value="UniProtKB-SubCell"/>
</dbReference>
<dbReference type="GO" id="GO:1990904">
    <property type="term" value="C:ribonucleoprotein complex"/>
    <property type="evidence" value="ECO:0007669"/>
    <property type="project" value="UniProtKB-KW"/>
</dbReference>
<dbReference type="GO" id="GO:0019013">
    <property type="term" value="C:viral nucleocapsid"/>
    <property type="evidence" value="ECO:0007669"/>
    <property type="project" value="UniProtKB-KW"/>
</dbReference>
<dbReference type="GO" id="GO:0003723">
    <property type="term" value="F:RNA binding"/>
    <property type="evidence" value="ECO:0007669"/>
    <property type="project" value="UniProtKB-KW"/>
</dbReference>
<dbReference type="GO" id="GO:0005198">
    <property type="term" value="F:structural molecule activity"/>
    <property type="evidence" value="ECO:0007669"/>
    <property type="project" value="InterPro"/>
</dbReference>
<dbReference type="InterPro" id="IPR002021">
    <property type="entry name" value="Paramyx_ncap"/>
</dbReference>
<dbReference type="Pfam" id="PF00973">
    <property type="entry name" value="Paramyxo_ncap"/>
    <property type="match status" value="1"/>
</dbReference>
<protein>
    <recommendedName>
        <fullName>Nucleoprotein</fullName>
    </recommendedName>
    <alternativeName>
        <fullName>Nucleocapsid protein</fullName>
        <shortName>NP</shortName>
        <shortName>Protein N</shortName>
    </alternativeName>
</protein>
<organismHost>
    <name type="scientific">Homo sapiens</name>
    <name type="common">Human</name>
    <dbReference type="NCBI Taxonomy" id="9606"/>
</organismHost>
<reference key="1">
    <citation type="journal article" date="1992" name="Arch. Virol.">
        <title>Molecular evolution of human paramyxoviruses. Nucleotide sequence analyses of the human parainfluenza type 1 virus NP and M protein genes and construction of phylogenetic trees for all the human paramyxoviruses.</title>
        <authorList>
            <person name="Miyahara K."/>
            <person name="Kitada S."/>
            <person name="Yoshimoto M."/>
            <person name="Matsumura H."/>
            <person name="Kawano M."/>
            <person name="Komada H."/>
            <person name="Tsurudome M."/>
            <person name="Kusagawa S."/>
            <person name="Nishio M."/>
            <person name="Ito Y."/>
        </authorList>
    </citation>
    <scope>NUCLEOTIDE SEQUENCE [GENOMIC RNA]</scope>
</reference>
<gene>
    <name type="primary">N</name>
    <name type="synonym">NP</name>
</gene>
<proteinExistence type="inferred from homology"/>
<comment type="function">
    <text evidence="2 3">Forms the helical nucleocapsid (NC) in a ratio of 1 N per 6 ribonucleotides, protecting the genome from nucleases (By similarity). The encapsidated genomic RNA serves as template for transcription and replication; encapsidation by N is coupled to RNA synthesis. Forms the encapsidation complex with the phosphoprotein protein P. Before encapsidation, the newly synthesized free N protein, so-called N0, is chaperoned by P (By similarity).</text>
</comment>
<comment type="subunit">
    <text evidence="1 2 3">Homomultimer; forms the nucleocapsid (By similarity). Binds to the viral genomic RNA (By similarity). N0 interacts with the phosphoprotein (via N-terminus); this interaction allows P to chaperon N0 to avoid N polymerization before encapsidation (By similarity). Interacts as N-RNA template with the phosphoprotein (via C-terminus); this interaction positions the polymerase on the template (By similarity).</text>
</comment>
<comment type="subcellular location">
    <subcellularLocation>
        <location evidence="5">Virion</location>
    </subcellularLocation>
    <subcellularLocation>
        <location>Host cytoplasm</location>
    </subcellularLocation>
</comment>
<comment type="domain">
    <text evidence="2">Ncore is globular and carries regions required for self-assembly and RNA-binding. Ntail is an intrinsically disordered monomeric domain in the C-terminus.</text>
</comment>
<comment type="similarity">
    <text evidence="5">Belongs to the paramyxoviruses nucleocapsid family.</text>
</comment>
<keyword id="KW-0167">Capsid protein</keyword>
<keyword id="KW-1139">Helical capsid protein</keyword>
<keyword id="KW-1035">Host cytoplasm</keyword>
<keyword id="KW-0687">Ribonucleoprotein</keyword>
<keyword id="KW-0694">RNA-binding</keyword>
<keyword id="KW-0543">Viral nucleoprotein</keyword>
<keyword id="KW-0946">Virion</keyword>